<protein>
    <recommendedName>
        <fullName>Extracellular metalloproteinase 10</fullName>
        <ecNumber>3.4.24.-</ecNumber>
    </recommendedName>
    <alternativeName>
        <fullName>Elastinolytic metalloproteinase MEP10</fullName>
    </alternativeName>
    <alternativeName>
        <fullName>Fungalysin MEP10</fullName>
    </alternativeName>
</protein>
<gene>
    <name type="primary">MEP10</name>
    <name type="ORF">UREG_06232</name>
</gene>
<dbReference type="EC" id="3.4.24.-"/>
<dbReference type="EMBL" id="CH476618">
    <property type="protein sequence ID" value="EEP81367.1"/>
    <property type="molecule type" value="Genomic_DNA"/>
</dbReference>
<dbReference type="RefSeq" id="XP_002583265.1">
    <property type="nucleotide sequence ID" value="XM_002583219.1"/>
</dbReference>
<dbReference type="SMR" id="C4JX59"/>
<dbReference type="MEROPS" id="M36.001"/>
<dbReference type="GlyCosmos" id="C4JX59">
    <property type="glycosylation" value="2 sites, No reported glycans"/>
</dbReference>
<dbReference type="GeneID" id="8441585"/>
<dbReference type="KEGG" id="ure:UREG_06232"/>
<dbReference type="VEuPathDB" id="FungiDB:UREG_06232"/>
<dbReference type="eggNOG" id="ENOG502QTDC">
    <property type="taxonomic scope" value="Eukaryota"/>
</dbReference>
<dbReference type="HOGENOM" id="CLU_012703_3_0_1"/>
<dbReference type="InParanoid" id="C4JX59"/>
<dbReference type="OMA" id="YIWTRAN"/>
<dbReference type="OrthoDB" id="3227768at2759"/>
<dbReference type="Proteomes" id="UP000002058">
    <property type="component" value="Unassembled WGS sequence"/>
</dbReference>
<dbReference type="GO" id="GO:0005576">
    <property type="term" value="C:extracellular region"/>
    <property type="evidence" value="ECO:0007669"/>
    <property type="project" value="UniProtKB-SubCell"/>
</dbReference>
<dbReference type="GO" id="GO:0004222">
    <property type="term" value="F:metalloendopeptidase activity"/>
    <property type="evidence" value="ECO:0007669"/>
    <property type="project" value="InterPro"/>
</dbReference>
<dbReference type="GO" id="GO:0008270">
    <property type="term" value="F:zinc ion binding"/>
    <property type="evidence" value="ECO:0007669"/>
    <property type="project" value="InterPro"/>
</dbReference>
<dbReference type="GO" id="GO:0006508">
    <property type="term" value="P:proteolysis"/>
    <property type="evidence" value="ECO:0007669"/>
    <property type="project" value="UniProtKB-KW"/>
</dbReference>
<dbReference type="CDD" id="cd09596">
    <property type="entry name" value="M36"/>
    <property type="match status" value="1"/>
</dbReference>
<dbReference type="Gene3D" id="3.10.170.10">
    <property type="match status" value="1"/>
</dbReference>
<dbReference type="Gene3D" id="1.10.390.10">
    <property type="entry name" value="Neutral Protease Domain 2"/>
    <property type="match status" value="1"/>
</dbReference>
<dbReference type="InterPro" id="IPR011096">
    <property type="entry name" value="FTP_domain"/>
</dbReference>
<dbReference type="InterPro" id="IPR050371">
    <property type="entry name" value="Fungal_virulence_M36"/>
</dbReference>
<dbReference type="InterPro" id="IPR001842">
    <property type="entry name" value="Peptidase_M36"/>
</dbReference>
<dbReference type="InterPro" id="IPR027268">
    <property type="entry name" value="Peptidase_M4/M1_CTD_sf"/>
</dbReference>
<dbReference type="PANTHER" id="PTHR33478">
    <property type="entry name" value="EXTRACELLULAR METALLOPROTEINASE MEP"/>
    <property type="match status" value="1"/>
</dbReference>
<dbReference type="PANTHER" id="PTHR33478:SF1">
    <property type="entry name" value="EXTRACELLULAR METALLOPROTEINASE MEP"/>
    <property type="match status" value="1"/>
</dbReference>
<dbReference type="Pfam" id="PF07504">
    <property type="entry name" value="FTP"/>
    <property type="match status" value="1"/>
</dbReference>
<dbReference type="Pfam" id="PF02128">
    <property type="entry name" value="Peptidase_M36"/>
    <property type="match status" value="1"/>
</dbReference>
<dbReference type="PRINTS" id="PR00999">
    <property type="entry name" value="FUNGALYSIN"/>
</dbReference>
<dbReference type="SUPFAM" id="SSF55486">
    <property type="entry name" value="Metalloproteases ('zincins'), catalytic domain"/>
    <property type="match status" value="1"/>
</dbReference>
<dbReference type="PROSITE" id="PS00142">
    <property type="entry name" value="ZINC_PROTEASE"/>
    <property type="match status" value="1"/>
</dbReference>
<sequence length="637" mass="70622">MHGLLLAATLLSLPFNAVAHVPPTTGLVRRGVDLDSFRLNERSQFKISEQVEKDSGVSALHSRNYVDVATRLVKRVAPKATFRLVDDHYIGDTGVGHVYFRQTINGVDVDNGDFNVNIGRNGRVFSYGNSFHTGDVPESNLRVKEDPSNPVQALHGALKALRIPIKAERAVAEATNEEDDEDFVLKGTSGALADPTAKLVYLMKNDGSLALTWRVETDIGDNWLLTYVDAEDTTKVHNVVDYVAHATYKVYRWGIADPTEGELEVISDPWNLRTSEFTWHGNGTTRFSTTIGNNGIAQSNPTGGSEYLNNYRPQPADLKFEYDYSPSMNPPSTYIDASITQLWYSANTYHDLLYMLGFNERSGNFETNNNNQGGKGNDYVILNAQDGSGTNNANFATPPDGRPGRMRMYIWTRANPPRDVCFEEGTVVHEYTHGLSNRLTGGPANSRCLNALESGGMGEGWSDFFATAVRLKPKDTRHTDYPKGAWVANNPRGVRQYVYSTNMTTNPLVYTTVNSLNQVHAIGTVWATILYEVLWNLIDKHGKNDGPTPKFRNGVPTDGKYLAMKLVLDGLALQPCNPNFVQARDAILDADKILTGGRNQCELWKGFAKRELGTGAKWDPRNRVGSTRVPVICRIFT</sequence>
<comment type="function">
    <text evidence="1">Secreted metalloproteinase that allows assimilation of proteinaceous substrates.</text>
</comment>
<comment type="cofactor">
    <cofactor evidence="1">
        <name>Zn(2+)</name>
        <dbReference type="ChEBI" id="CHEBI:29105"/>
    </cofactor>
    <text evidence="1">Binds 1 zinc ion per subunit.</text>
</comment>
<comment type="subcellular location">
    <subcellularLocation>
        <location evidence="1">Secreted</location>
    </subcellularLocation>
</comment>
<comment type="similarity">
    <text evidence="4">Belongs to the peptidase M36 family.</text>
</comment>
<reference key="1">
    <citation type="journal article" date="2009" name="Genome Res.">
        <title>Comparative genomic analyses of the human fungal pathogens Coccidioides and their relatives.</title>
        <authorList>
            <person name="Sharpton T.J."/>
            <person name="Stajich J.E."/>
            <person name="Rounsley S.D."/>
            <person name="Gardner M.J."/>
            <person name="Wortman J.R."/>
            <person name="Jordar V.S."/>
            <person name="Maiti R."/>
            <person name="Kodira C.D."/>
            <person name="Neafsey D.E."/>
            <person name="Zeng Q."/>
            <person name="Hung C.-Y."/>
            <person name="McMahan C."/>
            <person name="Muszewska A."/>
            <person name="Grynberg M."/>
            <person name="Mandel M.A."/>
            <person name="Kellner E.M."/>
            <person name="Barker B.M."/>
            <person name="Galgiani J.N."/>
            <person name="Orbach M.J."/>
            <person name="Kirkland T.N."/>
            <person name="Cole G.T."/>
            <person name="Henn M.R."/>
            <person name="Birren B.W."/>
            <person name="Taylor J.W."/>
        </authorList>
    </citation>
    <scope>NUCLEOTIDE SEQUENCE [LARGE SCALE GENOMIC DNA]</scope>
    <source>
        <strain>UAMH 1704</strain>
    </source>
</reference>
<name>MEP10_UNCRE</name>
<accession>C4JX59</accession>
<feature type="signal peptide" evidence="2">
    <location>
        <begin position="1"/>
        <end position="19"/>
    </location>
</feature>
<feature type="propeptide" id="PRO_0000407150" evidence="1">
    <location>
        <begin position="20"/>
        <end position="245"/>
    </location>
</feature>
<feature type="chain" id="PRO_0000407151" description="Extracellular metalloproteinase 10">
    <location>
        <begin position="246"/>
        <end position="637"/>
    </location>
</feature>
<feature type="active site" evidence="3">
    <location>
        <position position="430"/>
    </location>
</feature>
<feature type="binding site" evidence="3">
    <location>
        <position position="429"/>
    </location>
    <ligand>
        <name>Zn(2+)</name>
        <dbReference type="ChEBI" id="CHEBI:29105"/>
        <note>catalytic</note>
    </ligand>
</feature>
<feature type="binding site" evidence="3">
    <location>
        <position position="433"/>
    </location>
    <ligand>
        <name>Zn(2+)</name>
        <dbReference type="ChEBI" id="CHEBI:29105"/>
        <note>catalytic</note>
    </ligand>
</feature>
<feature type="glycosylation site" description="N-linked (GlcNAc...) asparagine" evidence="2">
    <location>
        <position position="282"/>
    </location>
</feature>
<feature type="glycosylation site" description="N-linked (GlcNAc...) asparagine" evidence="2">
    <location>
        <position position="502"/>
    </location>
</feature>
<organism>
    <name type="scientific">Uncinocarpus reesii (strain UAMH 1704)</name>
    <dbReference type="NCBI Taxonomy" id="336963"/>
    <lineage>
        <taxon>Eukaryota</taxon>
        <taxon>Fungi</taxon>
        <taxon>Dikarya</taxon>
        <taxon>Ascomycota</taxon>
        <taxon>Pezizomycotina</taxon>
        <taxon>Eurotiomycetes</taxon>
        <taxon>Eurotiomycetidae</taxon>
        <taxon>Onygenales</taxon>
        <taxon>Onygenaceae</taxon>
        <taxon>Uncinocarpus</taxon>
    </lineage>
</organism>
<evidence type="ECO:0000250" key="1"/>
<evidence type="ECO:0000255" key="2"/>
<evidence type="ECO:0000255" key="3">
    <source>
        <dbReference type="PROSITE-ProRule" id="PRU10095"/>
    </source>
</evidence>
<evidence type="ECO:0000305" key="4"/>
<proteinExistence type="inferred from homology"/>
<keyword id="KW-0325">Glycoprotein</keyword>
<keyword id="KW-0378">Hydrolase</keyword>
<keyword id="KW-0479">Metal-binding</keyword>
<keyword id="KW-0482">Metalloprotease</keyword>
<keyword id="KW-0645">Protease</keyword>
<keyword id="KW-1185">Reference proteome</keyword>
<keyword id="KW-0964">Secreted</keyword>
<keyword id="KW-0732">Signal</keyword>
<keyword id="KW-0862">Zinc</keyword>
<keyword id="KW-0865">Zymogen</keyword>